<feature type="chain" id="PRO_1000148833" description="Undecaprenyl-diphosphatase">
    <location>
        <begin position="1"/>
        <end position="269"/>
    </location>
</feature>
<feature type="transmembrane region" description="Helical" evidence="1">
    <location>
        <begin position="41"/>
        <end position="61"/>
    </location>
</feature>
<feature type="transmembrane region" description="Helical" evidence="1">
    <location>
        <begin position="78"/>
        <end position="98"/>
    </location>
</feature>
<feature type="transmembrane region" description="Helical" evidence="1">
    <location>
        <begin position="107"/>
        <end position="127"/>
    </location>
</feature>
<feature type="transmembrane region" description="Helical" evidence="1">
    <location>
        <begin position="148"/>
        <end position="167"/>
    </location>
</feature>
<feature type="transmembrane region" description="Helical" evidence="1">
    <location>
        <begin position="184"/>
        <end position="204"/>
    </location>
</feature>
<feature type="transmembrane region" description="Helical" evidence="1">
    <location>
        <begin position="213"/>
        <end position="233"/>
    </location>
</feature>
<feature type="transmembrane region" description="Helical" evidence="1">
    <location>
        <begin position="248"/>
        <end position="268"/>
    </location>
</feature>
<accession>B0K909</accession>
<proteinExistence type="inferred from homology"/>
<comment type="function">
    <text evidence="1">Catalyzes the dephosphorylation of undecaprenyl diphosphate (UPP). Confers resistance to bacitracin.</text>
</comment>
<comment type="catalytic activity">
    <reaction evidence="1">
        <text>di-trans,octa-cis-undecaprenyl diphosphate + H2O = di-trans,octa-cis-undecaprenyl phosphate + phosphate + H(+)</text>
        <dbReference type="Rhea" id="RHEA:28094"/>
        <dbReference type="ChEBI" id="CHEBI:15377"/>
        <dbReference type="ChEBI" id="CHEBI:15378"/>
        <dbReference type="ChEBI" id="CHEBI:43474"/>
        <dbReference type="ChEBI" id="CHEBI:58405"/>
        <dbReference type="ChEBI" id="CHEBI:60392"/>
        <dbReference type="EC" id="3.6.1.27"/>
    </reaction>
</comment>
<comment type="subcellular location">
    <subcellularLocation>
        <location evidence="1">Cell membrane</location>
        <topology evidence="1">Multi-pass membrane protein</topology>
    </subcellularLocation>
</comment>
<comment type="miscellaneous">
    <text>Bacitracin is thought to be involved in the inhibition of peptidoglycan synthesis by sequestering undecaprenyl diphosphate, thereby reducing the pool of lipid carrier available.</text>
</comment>
<comment type="similarity">
    <text evidence="1">Belongs to the UppP family.</text>
</comment>
<organism>
    <name type="scientific">Thermoanaerobacter pseudethanolicus (strain ATCC 33223 / 39E)</name>
    <name type="common">Clostridium thermohydrosulfuricum</name>
    <dbReference type="NCBI Taxonomy" id="340099"/>
    <lineage>
        <taxon>Bacteria</taxon>
        <taxon>Bacillati</taxon>
        <taxon>Bacillota</taxon>
        <taxon>Clostridia</taxon>
        <taxon>Thermoanaerobacterales</taxon>
        <taxon>Thermoanaerobacteraceae</taxon>
        <taxon>Thermoanaerobacter</taxon>
    </lineage>
</organism>
<name>UPPP_THEP3</name>
<keyword id="KW-0046">Antibiotic resistance</keyword>
<keyword id="KW-1003">Cell membrane</keyword>
<keyword id="KW-0133">Cell shape</keyword>
<keyword id="KW-0961">Cell wall biogenesis/degradation</keyword>
<keyword id="KW-0378">Hydrolase</keyword>
<keyword id="KW-0472">Membrane</keyword>
<keyword id="KW-0573">Peptidoglycan synthesis</keyword>
<keyword id="KW-1185">Reference proteome</keyword>
<keyword id="KW-0812">Transmembrane</keyword>
<keyword id="KW-1133">Transmembrane helix</keyword>
<evidence type="ECO:0000255" key="1">
    <source>
        <dbReference type="HAMAP-Rule" id="MF_01006"/>
    </source>
</evidence>
<sequence length="269" mass="29699">MELLIKAFIMGIVEGLTEFLPISSTGHLIIVGKFIHFTGNFATMFEIVIQLGAILAVVFHYRKKIFASLKNLKPGSWGFNLWFKIFIAFIPAAVIGLLTHKYIEEHLFSPFTVAIALIAGAIMMIVIEDTFGKRYKIDNMDKVDTKKSLLIGIAQVMSLFPGMSRSASTIMGGMLAGLSVKAAAEFSFFLAIPTMFAATTLSLLKGFSAMSLLEWQALAVGFITSFLTALFVVDKFLSYLTRHSLKPFAYYRLAVGVLMILLVAEKIVK</sequence>
<gene>
    <name evidence="1" type="primary">uppP</name>
    <name type="ordered locus">Teth39_0967</name>
</gene>
<protein>
    <recommendedName>
        <fullName evidence="1">Undecaprenyl-diphosphatase</fullName>
        <ecNumber evidence="1">3.6.1.27</ecNumber>
    </recommendedName>
    <alternativeName>
        <fullName evidence="1">Bacitracin resistance protein</fullName>
    </alternativeName>
    <alternativeName>
        <fullName evidence="1">Undecaprenyl pyrophosphate phosphatase</fullName>
    </alternativeName>
</protein>
<reference key="1">
    <citation type="submission" date="2008-01" db="EMBL/GenBank/DDBJ databases">
        <title>Complete sequence of Thermoanaerobacter pseudethanolicus 39E.</title>
        <authorList>
            <person name="Copeland A."/>
            <person name="Lucas S."/>
            <person name="Lapidus A."/>
            <person name="Barry K."/>
            <person name="Glavina del Rio T."/>
            <person name="Dalin E."/>
            <person name="Tice H."/>
            <person name="Pitluck S."/>
            <person name="Bruce D."/>
            <person name="Goodwin L."/>
            <person name="Saunders E."/>
            <person name="Brettin T."/>
            <person name="Detter J.C."/>
            <person name="Han C."/>
            <person name="Schmutz J."/>
            <person name="Larimer F."/>
            <person name="Land M."/>
            <person name="Hauser L."/>
            <person name="Kyrpides N."/>
            <person name="Lykidis A."/>
            <person name="Hemme C."/>
            <person name="Fields M.W."/>
            <person name="He Z."/>
            <person name="Zhou J."/>
            <person name="Richardson P."/>
        </authorList>
    </citation>
    <scope>NUCLEOTIDE SEQUENCE [LARGE SCALE GENOMIC DNA]</scope>
    <source>
        <strain>ATCC 33223 / DSM 2355 / 39E</strain>
    </source>
</reference>
<dbReference type="EC" id="3.6.1.27" evidence="1"/>
<dbReference type="EMBL" id="CP000924">
    <property type="protein sequence ID" value="ABY94622.1"/>
    <property type="molecule type" value="Genomic_DNA"/>
</dbReference>
<dbReference type="RefSeq" id="WP_012269254.1">
    <property type="nucleotide sequence ID" value="NC_010321.1"/>
</dbReference>
<dbReference type="SMR" id="B0K909"/>
<dbReference type="STRING" id="340099.Teth39_0967"/>
<dbReference type="KEGG" id="tpd:Teth39_0967"/>
<dbReference type="eggNOG" id="COG1968">
    <property type="taxonomic scope" value="Bacteria"/>
</dbReference>
<dbReference type="HOGENOM" id="CLU_060296_2_0_9"/>
<dbReference type="Proteomes" id="UP000002156">
    <property type="component" value="Chromosome"/>
</dbReference>
<dbReference type="GO" id="GO:0005886">
    <property type="term" value="C:plasma membrane"/>
    <property type="evidence" value="ECO:0007669"/>
    <property type="project" value="UniProtKB-SubCell"/>
</dbReference>
<dbReference type="GO" id="GO:0050380">
    <property type="term" value="F:undecaprenyl-diphosphatase activity"/>
    <property type="evidence" value="ECO:0007669"/>
    <property type="project" value="UniProtKB-UniRule"/>
</dbReference>
<dbReference type="GO" id="GO:0071555">
    <property type="term" value="P:cell wall organization"/>
    <property type="evidence" value="ECO:0007669"/>
    <property type="project" value="UniProtKB-KW"/>
</dbReference>
<dbReference type="GO" id="GO:0009252">
    <property type="term" value="P:peptidoglycan biosynthetic process"/>
    <property type="evidence" value="ECO:0007669"/>
    <property type="project" value="UniProtKB-KW"/>
</dbReference>
<dbReference type="GO" id="GO:0008360">
    <property type="term" value="P:regulation of cell shape"/>
    <property type="evidence" value="ECO:0007669"/>
    <property type="project" value="UniProtKB-KW"/>
</dbReference>
<dbReference type="GO" id="GO:0046677">
    <property type="term" value="P:response to antibiotic"/>
    <property type="evidence" value="ECO:0007669"/>
    <property type="project" value="UniProtKB-UniRule"/>
</dbReference>
<dbReference type="HAMAP" id="MF_01006">
    <property type="entry name" value="Undec_diphosphatase"/>
    <property type="match status" value="1"/>
</dbReference>
<dbReference type="InterPro" id="IPR003824">
    <property type="entry name" value="UppP"/>
</dbReference>
<dbReference type="NCBIfam" id="NF001389">
    <property type="entry name" value="PRK00281.1-2"/>
    <property type="match status" value="1"/>
</dbReference>
<dbReference type="NCBIfam" id="NF001390">
    <property type="entry name" value="PRK00281.1-4"/>
    <property type="match status" value="1"/>
</dbReference>
<dbReference type="NCBIfam" id="TIGR00753">
    <property type="entry name" value="undec_PP_bacA"/>
    <property type="match status" value="1"/>
</dbReference>
<dbReference type="PANTHER" id="PTHR30622">
    <property type="entry name" value="UNDECAPRENYL-DIPHOSPHATASE"/>
    <property type="match status" value="1"/>
</dbReference>
<dbReference type="PANTHER" id="PTHR30622:SF3">
    <property type="entry name" value="UNDECAPRENYL-DIPHOSPHATASE"/>
    <property type="match status" value="1"/>
</dbReference>
<dbReference type="Pfam" id="PF02673">
    <property type="entry name" value="BacA"/>
    <property type="match status" value="1"/>
</dbReference>